<sequence>MLLIPAIDLKDGQCVRLKQGDMDQATIFSEDPAAMARKWVDLGARRLHLVDLNGAFAGKPKNLEAIEAILEEVGDEIPVQLGGGIRSLETIEKYLDAGLSYVIIGTAAVKNPGFLQDACTAFSGSIIVGLDAKDGKVATDGWSKLTGHEVIDLARKFEDYGVESIVYTDIGRDGMLQGINIDATVKLAQAVGIPVIASGGLSNLTDIENLCEVEEHGVEGVICGRAIYSGDLDFAAAQKRADELNGELDDA</sequence>
<dbReference type="EC" id="5.3.1.16" evidence="1"/>
<dbReference type="EMBL" id="CP000614">
    <property type="protein sequence ID" value="ABO53421.1"/>
    <property type="molecule type" value="Genomic_DNA"/>
</dbReference>
<dbReference type="SMR" id="A4JAW8"/>
<dbReference type="KEGG" id="bvi:Bcep1808_0409"/>
<dbReference type="eggNOG" id="COG0106">
    <property type="taxonomic scope" value="Bacteria"/>
</dbReference>
<dbReference type="HOGENOM" id="CLU_048577_1_1_4"/>
<dbReference type="UniPathway" id="UPA00031">
    <property type="reaction ID" value="UER00009"/>
</dbReference>
<dbReference type="Proteomes" id="UP000002287">
    <property type="component" value="Chromosome 1"/>
</dbReference>
<dbReference type="GO" id="GO:0005737">
    <property type="term" value="C:cytoplasm"/>
    <property type="evidence" value="ECO:0007669"/>
    <property type="project" value="UniProtKB-SubCell"/>
</dbReference>
<dbReference type="GO" id="GO:0003949">
    <property type="term" value="F:1-(5-phosphoribosyl)-5-[(5-phosphoribosylamino)methylideneamino]imidazole-4-carboxamide isomerase activity"/>
    <property type="evidence" value="ECO:0007669"/>
    <property type="project" value="UniProtKB-UniRule"/>
</dbReference>
<dbReference type="GO" id="GO:0000105">
    <property type="term" value="P:L-histidine biosynthetic process"/>
    <property type="evidence" value="ECO:0007669"/>
    <property type="project" value="UniProtKB-UniRule"/>
</dbReference>
<dbReference type="GO" id="GO:0000162">
    <property type="term" value="P:L-tryptophan biosynthetic process"/>
    <property type="evidence" value="ECO:0007669"/>
    <property type="project" value="TreeGrafter"/>
</dbReference>
<dbReference type="CDD" id="cd04732">
    <property type="entry name" value="HisA"/>
    <property type="match status" value="1"/>
</dbReference>
<dbReference type="FunFam" id="3.20.20.70:FF:000009">
    <property type="entry name" value="1-(5-phosphoribosyl)-5-[(5-phosphoribosylamino)methylideneamino] imidazole-4-carboxamide isomerase"/>
    <property type="match status" value="1"/>
</dbReference>
<dbReference type="Gene3D" id="3.20.20.70">
    <property type="entry name" value="Aldolase class I"/>
    <property type="match status" value="1"/>
</dbReference>
<dbReference type="HAMAP" id="MF_01014">
    <property type="entry name" value="HisA"/>
    <property type="match status" value="1"/>
</dbReference>
<dbReference type="InterPro" id="IPR013785">
    <property type="entry name" value="Aldolase_TIM"/>
</dbReference>
<dbReference type="InterPro" id="IPR006062">
    <property type="entry name" value="His_biosynth"/>
</dbReference>
<dbReference type="InterPro" id="IPR006063">
    <property type="entry name" value="HisA_bact_arch"/>
</dbReference>
<dbReference type="InterPro" id="IPR044524">
    <property type="entry name" value="Isoase_HisA-like"/>
</dbReference>
<dbReference type="InterPro" id="IPR023016">
    <property type="entry name" value="Isoase_HisA-like_bact"/>
</dbReference>
<dbReference type="InterPro" id="IPR011060">
    <property type="entry name" value="RibuloseP-bd_barrel"/>
</dbReference>
<dbReference type="NCBIfam" id="TIGR00007">
    <property type="entry name" value="1-(5-phosphoribosyl)-5-[(5-phosphoribosylamino)methylideneamino]imidazole-4-carboxamide isomerase"/>
    <property type="match status" value="1"/>
</dbReference>
<dbReference type="NCBIfam" id="NF010112">
    <property type="entry name" value="PRK13585.1"/>
    <property type="match status" value="1"/>
</dbReference>
<dbReference type="PANTHER" id="PTHR43090">
    <property type="entry name" value="1-(5-PHOSPHORIBOSYL)-5-[(5-PHOSPHORIBOSYLAMINO)METHYLIDENEAMINO] IMIDAZOLE-4-CARBOXAMIDE ISOMERASE"/>
    <property type="match status" value="1"/>
</dbReference>
<dbReference type="PANTHER" id="PTHR43090:SF2">
    <property type="entry name" value="1-(5-PHOSPHORIBOSYL)-5-[(5-PHOSPHORIBOSYLAMINO)METHYLIDENEAMINO] IMIDAZOLE-4-CARBOXAMIDE ISOMERASE"/>
    <property type="match status" value="1"/>
</dbReference>
<dbReference type="Pfam" id="PF00977">
    <property type="entry name" value="His_biosynth"/>
    <property type="match status" value="1"/>
</dbReference>
<dbReference type="SUPFAM" id="SSF51366">
    <property type="entry name" value="Ribulose-phoshate binding barrel"/>
    <property type="match status" value="1"/>
</dbReference>
<organism>
    <name type="scientific">Burkholderia vietnamiensis (strain G4 / LMG 22486)</name>
    <name type="common">Burkholderia cepacia (strain R1808)</name>
    <dbReference type="NCBI Taxonomy" id="269482"/>
    <lineage>
        <taxon>Bacteria</taxon>
        <taxon>Pseudomonadati</taxon>
        <taxon>Pseudomonadota</taxon>
        <taxon>Betaproteobacteria</taxon>
        <taxon>Burkholderiales</taxon>
        <taxon>Burkholderiaceae</taxon>
        <taxon>Burkholderia</taxon>
        <taxon>Burkholderia cepacia complex</taxon>
    </lineage>
</organism>
<reference key="1">
    <citation type="submission" date="2007-03" db="EMBL/GenBank/DDBJ databases">
        <title>Complete sequence of chromosome 1 of Burkholderia vietnamiensis G4.</title>
        <authorList>
            <consortium name="US DOE Joint Genome Institute"/>
            <person name="Copeland A."/>
            <person name="Lucas S."/>
            <person name="Lapidus A."/>
            <person name="Barry K."/>
            <person name="Detter J.C."/>
            <person name="Glavina del Rio T."/>
            <person name="Hammon N."/>
            <person name="Israni S."/>
            <person name="Dalin E."/>
            <person name="Tice H."/>
            <person name="Pitluck S."/>
            <person name="Chain P."/>
            <person name="Malfatti S."/>
            <person name="Shin M."/>
            <person name="Vergez L."/>
            <person name="Schmutz J."/>
            <person name="Larimer F."/>
            <person name="Land M."/>
            <person name="Hauser L."/>
            <person name="Kyrpides N."/>
            <person name="Tiedje J."/>
            <person name="Richardson P."/>
        </authorList>
    </citation>
    <scope>NUCLEOTIDE SEQUENCE [LARGE SCALE GENOMIC DNA]</scope>
    <source>
        <strain>G4 / LMG 22486</strain>
    </source>
</reference>
<name>HIS4_BURVG</name>
<keyword id="KW-0028">Amino-acid biosynthesis</keyword>
<keyword id="KW-0963">Cytoplasm</keyword>
<keyword id="KW-0368">Histidine biosynthesis</keyword>
<keyword id="KW-0413">Isomerase</keyword>
<comment type="catalytic activity">
    <reaction evidence="1">
        <text>1-(5-phospho-beta-D-ribosyl)-5-[(5-phospho-beta-D-ribosylamino)methylideneamino]imidazole-4-carboxamide = 5-[(5-phospho-1-deoxy-D-ribulos-1-ylimino)methylamino]-1-(5-phospho-beta-D-ribosyl)imidazole-4-carboxamide</text>
        <dbReference type="Rhea" id="RHEA:15469"/>
        <dbReference type="ChEBI" id="CHEBI:58435"/>
        <dbReference type="ChEBI" id="CHEBI:58525"/>
        <dbReference type="EC" id="5.3.1.16"/>
    </reaction>
</comment>
<comment type="pathway">
    <text evidence="1">Amino-acid biosynthesis; L-histidine biosynthesis; L-histidine from 5-phospho-alpha-D-ribose 1-diphosphate: step 4/9.</text>
</comment>
<comment type="subcellular location">
    <subcellularLocation>
        <location evidence="1">Cytoplasm</location>
    </subcellularLocation>
</comment>
<comment type="similarity">
    <text evidence="1">Belongs to the HisA/HisF family.</text>
</comment>
<accession>A4JAW8</accession>
<evidence type="ECO:0000255" key="1">
    <source>
        <dbReference type="HAMAP-Rule" id="MF_01014"/>
    </source>
</evidence>
<protein>
    <recommendedName>
        <fullName evidence="1">1-(5-phosphoribosyl)-5-[(5-phosphoribosylamino)methylideneamino] imidazole-4-carboxamide isomerase</fullName>
        <ecNumber evidence="1">5.3.1.16</ecNumber>
    </recommendedName>
    <alternativeName>
        <fullName evidence="1">Phosphoribosylformimino-5-aminoimidazole carboxamide ribotide isomerase</fullName>
    </alternativeName>
</protein>
<feature type="chain" id="PRO_1000063195" description="1-(5-phosphoribosyl)-5-[(5-phosphoribosylamino)methylideneamino] imidazole-4-carboxamide isomerase">
    <location>
        <begin position="1"/>
        <end position="251"/>
    </location>
</feature>
<feature type="active site" description="Proton acceptor" evidence="1">
    <location>
        <position position="8"/>
    </location>
</feature>
<feature type="active site" description="Proton donor" evidence="1">
    <location>
        <position position="131"/>
    </location>
</feature>
<gene>
    <name evidence="1" type="primary">hisA</name>
    <name type="ordered locus">Bcep1808_0409</name>
</gene>
<proteinExistence type="inferred from homology"/>